<keyword id="KW-0963">Cytoplasm</keyword>
<keyword id="KW-0690">Ribosome biogenesis</keyword>
<name>RBFA_LEPBJ</name>
<evidence type="ECO:0000255" key="1">
    <source>
        <dbReference type="HAMAP-Rule" id="MF_00003"/>
    </source>
</evidence>
<protein>
    <recommendedName>
        <fullName evidence="1">Ribosome-binding factor A</fullName>
    </recommendedName>
</protein>
<organism>
    <name type="scientific">Leptospira borgpetersenii serovar Hardjo-bovis (strain JB197)</name>
    <dbReference type="NCBI Taxonomy" id="355277"/>
    <lineage>
        <taxon>Bacteria</taxon>
        <taxon>Pseudomonadati</taxon>
        <taxon>Spirochaetota</taxon>
        <taxon>Spirochaetia</taxon>
        <taxon>Leptospirales</taxon>
        <taxon>Leptospiraceae</taxon>
        <taxon>Leptospira</taxon>
    </lineage>
</organism>
<accession>Q04U30</accession>
<sequence>MNPIRRRKIEAEAVRTVAMMILSGKVKDPRVHMVSVHRAEISEDGKNMKVFVTAICTDKKKLKVLSGLNSAAGLFQTTLSGKLGLRITPRMQFLWDEEYIQSLDESLRLTRKPTSAD</sequence>
<dbReference type="EMBL" id="CP000350">
    <property type="protein sequence ID" value="ABJ75590.1"/>
    <property type="molecule type" value="Genomic_DNA"/>
</dbReference>
<dbReference type="RefSeq" id="WP_002726152.1">
    <property type="nucleotide sequence ID" value="NC_008510.1"/>
</dbReference>
<dbReference type="SMR" id="Q04U30"/>
<dbReference type="GeneID" id="61174754"/>
<dbReference type="KEGG" id="lbj:LBJ_0947"/>
<dbReference type="HOGENOM" id="CLU_089475_5_1_12"/>
<dbReference type="Proteomes" id="UP000000656">
    <property type="component" value="Chromosome 1"/>
</dbReference>
<dbReference type="GO" id="GO:0005829">
    <property type="term" value="C:cytosol"/>
    <property type="evidence" value="ECO:0007669"/>
    <property type="project" value="TreeGrafter"/>
</dbReference>
<dbReference type="GO" id="GO:0043024">
    <property type="term" value="F:ribosomal small subunit binding"/>
    <property type="evidence" value="ECO:0007669"/>
    <property type="project" value="TreeGrafter"/>
</dbReference>
<dbReference type="GO" id="GO:0030490">
    <property type="term" value="P:maturation of SSU-rRNA"/>
    <property type="evidence" value="ECO:0007669"/>
    <property type="project" value="UniProtKB-UniRule"/>
</dbReference>
<dbReference type="FunFam" id="3.30.300.20:FF:000026">
    <property type="entry name" value="Ribosome-binding factor A"/>
    <property type="match status" value="1"/>
</dbReference>
<dbReference type="Gene3D" id="3.30.300.20">
    <property type="match status" value="1"/>
</dbReference>
<dbReference type="HAMAP" id="MF_00003">
    <property type="entry name" value="RbfA"/>
    <property type="match status" value="1"/>
</dbReference>
<dbReference type="InterPro" id="IPR015946">
    <property type="entry name" value="KH_dom-like_a/b"/>
</dbReference>
<dbReference type="InterPro" id="IPR000238">
    <property type="entry name" value="RbfA"/>
</dbReference>
<dbReference type="InterPro" id="IPR023799">
    <property type="entry name" value="RbfA_dom_sf"/>
</dbReference>
<dbReference type="InterPro" id="IPR020053">
    <property type="entry name" value="Ribosome-bd_factorA_CS"/>
</dbReference>
<dbReference type="NCBIfam" id="TIGR00082">
    <property type="entry name" value="rbfA"/>
    <property type="match status" value="1"/>
</dbReference>
<dbReference type="PANTHER" id="PTHR33515">
    <property type="entry name" value="RIBOSOME-BINDING FACTOR A, CHLOROPLASTIC-RELATED"/>
    <property type="match status" value="1"/>
</dbReference>
<dbReference type="PANTHER" id="PTHR33515:SF1">
    <property type="entry name" value="RIBOSOME-BINDING FACTOR A, CHLOROPLASTIC-RELATED"/>
    <property type="match status" value="1"/>
</dbReference>
<dbReference type="Pfam" id="PF02033">
    <property type="entry name" value="RBFA"/>
    <property type="match status" value="1"/>
</dbReference>
<dbReference type="SUPFAM" id="SSF89919">
    <property type="entry name" value="Ribosome-binding factor A, RbfA"/>
    <property type="match status" value="1"/>
</dbReference>
<dbReference type="PROSITE" id="PS01319">
    <property type="entry name" value="RBFA"/>
    <property type="match status" value="1"/>
</dbReference>
<proteinExistence type="inferred from homology"/>
<comment type="function">
    <text evidence="1">One of several proteins that assist in the late maturation steps of the functional core of the 30S ribosomal subunit. Associates with free 30S ribosomal subunits (but not with 30S subunits that are part of 70S ribosomes or polysomes). Required for efficient processing of 16S rRNA. May interact with the 5'-terminal helix region of 16S rRNA.</text>
</comment>
<comment type="subunit">
    <text evidence="1">Monomer. Binds 30S ribosomal subunits, but not 50S ribosomal subunits or 70S ribosomes.</text>
</comment>
<comment type="subcellular location">
    <subcellularLocation>
        <location evidence="1">Cytoplasm</location>
    </subcellularLocation>
</comment>
<comment type="similarity">
    <text evidence="1">Belongs to the RbfA family.</text>
</comment>
<reference key="1">
    <citation type="journal article" date="2006" name="Proc. Natl. Acad. Sci. U.S.A.">
        <title>Genome reduction in Leptospira borgpetersenii reflects limited transmission potential.</title>
        <authorList>
            <person name="Bulach D.M."/>
            <person name="Zuerner R.L."/>
            <person name="Wilson P."/>
            <person name="Seemann T."/>
            <person name="McGrath A."/>
            <person name="Cullen P.A."/>
            <person name="Davis J."/>
            <person name="Johnson M."/>
            <person name="Kuczek E."/>
            <person name="Alt D.P."/>
            <person name="Peterson-Burch B."/>
            <person name="Coppel R.L."/>
            <person name="Rood J.I."/>
            <person name="Davies J.K."/>
            <person name="Adler B."/>
        </authorList>
    </citation>
    <scope>NUCLEOTIDE SEQUENCE [LARGE SCALE GENOMIC DNA]</scope>
    <source>
        <strain>JB197</strain>
    </source>
</reference>
<gene>
    <name evidence="1" type="primary">rbfA</name>
    <name type="ordered locus">LBJ_0947</name>
</gene>
<feature type="chain" id="PRO_1000000132" description="Ribosome-binding factor A">
    <location>
        <begin position="1"/>
        <end position="117"/>
    </location>
</feature>